<sequence>MARTEDDSWEITESVGATALGVASARAAETRSQHPLISDPFAQVFLDAVGDGVWNWHSAPQLPAELLEIEPDLPLQMEAMVSYMASRTAFFDEFFLDATRAGIGQAVILAAGLDSRAWRLPWPAGTTVFELDQPRVLEFKAATLAEHGAEPACGRVAVAVDLRQDWPTALRQAGFDPSVSSVWSAEGLMPYLPAVAQDLLFERVQGLTVRASRIAVEALGPKFLDPQVRANRSARIERIRAVMAHVEPQREIPRTDELWYFEEREDVGDWFRRHDWDVTVTPSGELMAGYGRAAAAQVEDRVPTNLFVAAQRN</sequence>
<reference key="1">
    <citation type="journal article" date="2007" name="Genome Res.">
        <title>Reductive evolution and niche adaptation inferred from the genome of Mycobacterium ulcerans, the causative agent of Buruli ulcer.</title>
        <authorList>
            <person name="Stinear T.P."/>
            <person name="Seemann T."/>
            <person name="Pidot S."/>
            <person name="Frigui W."/>
            <person name="Reysset G."/>
            <person name="Garnier T."/>
            <person name="Meurice G."/>
            <person name="Simon D."/>
            <person name="Bouchier C."/>
            <person name="Ma L."/>
            <person name="Tichit M."/>
            <person name="Porter J.L."/>
            <person name="Ryan J."/>
            <person name="Johnson P.D.R."/>
            <person name="Davies J.K."/>
            <person name="Jenkin G.A."/>
            <person name="Small P.L.C."/>
            <person name="Jones L.M."/>
            <person name="Tekaia F."/>
            <person name="Laval F."/>
            <person name="Daffe M."/>
            <person name="Parkhill J."/>
            <person name="Cole S.T."/>
        </authorList>
    </citation>
    <scope>NUCLEOTIDE SEQUENCE [LARGE SCALE GENOMIC DNA]</scope>
    <source>
        <strain>Agy99</strain>
    </source>
</reference>
<name>Y706_MYCUA</name>
<evidence type="ECO:0000250" key="1"/>
<evidence type="ECO:0000305" key="2"/>
<keyword id="KW-0489">Methyltransferase</keyword>
<keyword id="KW-0949">S-adenosyl-L-methionine</keyword>
<keyword id="KW-0808">Transferase</keyword>
<protein>
    <recommendedName>
        <fullName>Putative S-adenosyl-L-methionine-dependent methyltransferase MUL_0706</fullName>
        <ecNumber>2.1.1.-</ecNumber>
    </recommendedName>
</protein>
<dbReference type="EC" id="2.1.1.-"/>
<dbReference type="EMBL" id="CP000325">
    <property type="protein sequence ID" value="ABL03360.1"/>
    <property type="molecule type" value="Genomic_DNA"/>
</dbReference>
<dbReference type="RefSeq" id="WP_011738985.1">
    <property type="nucleotide sequence ID" value="NC_008611.1"/>
</dbReference>
<dbReference type="SMR" id="A0PLZ1"/>
<dbReference type="KEGG" id="mul:MUL_0706"/>
<dbReference type="eggNOG" id="COG3315">
    <property type="taxonomic scope" value="Bacteria"/>
</dbReference>
<dbReference type="HOGENOM" id="CLU_056160_2_1_11"/>
<dbReference type="Proteomes" id="UP000000765">
    <property type="component" value="Chromosome"/>
</dbReference>
<dbReference type="GO" id="GO:0008168">
    <property type="term" value="F:methyltransferase activity"/>
    <property type="evidence" value="ECO:0007669"/>
    <property type="project" value="UniProtKB-KW"/>
</dbReference>
<dbReference type="GO" id="GO:0032259">
    <property type="term" value="P:methylation"/>
    <property type="evidence" value="ECO:0007669"/>
    <property type="project" value="UniProtKB-KW"/>
</dbReference>
<dbReference type="Gene3D" id="3.40.50.150">
    <property type="entry name" value="Vaccinia Virus protein VP39"/>
    <property type="match status" value="1"/>
</dbReference>
<dbReference type="InterPro" id="IPR007213">
    <property type="entry name" value="Ppm1/Ppm2/Tcmp"/>
</dbReference>
<dbReference type="InterPro" id="IPR029063">
    <property type="entry name" value="SAM-dependent_MTases_sf"/>
</dbReference>
<dbReference type="InterPro" id="IPR011610">
    <property type="entry name" value="SAM_mthyl_Trfase_ML2640-like"/>
</dbReference>
<dbReference type="NCBIfam" id="TIGR00027">
    <property type="entry name" value="mthyl_TIGR00027"/>
    <property type="match status" value="1"/>
</dbReference>
<dbReference type="PANTHER" id="PTHR43619">
    <property type="entry name" value="S-ADENOSYL-L-METHIONINE-DEPENDENT METHYLTRANSFERASE YKTD-RELATED"/>
    <property type="match status" value="1"/>
</dbReference>
<dbReference type="PANTHER" id="PTHR43619:SF2">
    <property type="entry name" value="S-ADENOSYL-L-METHIONINE-DEPENDENT METHYLTRANSFERASES SUPERFAMILY PROTEIN"/>
    <property type="match status" value="1"/>
</dbReference>
<dbReference type="Pfam" id="PF04072">
    <property type="entry name" value="LCM"/>
    <property type="match status" value="1"/>
</dbReference>
<dbReference type="SUPFAM" id="SSF53335">
    <property type="entry name" value="S-adenosyl-L-methionine-dependent methyltransferases"/>
    <property type="match status" value="1"/>
</dbReference>
<organism>
    <name type="scientific">Mycobacterium ulcerans (strain Agy99)</name>
    <dbReference type="NCBI Taxonomy" id="362242"/>
    <lineage>
        <taxon>Bacteria</taxon>
        <taxon>Bacillati</taxon>
        <taxon>Actinomycetota</taxon>
        <taxon>Actinomycetes</taxon>
        <taxon>Mycobacteriales</taxon>
        <taxon>Mycobacteriaceae</taxon>
        <taxon>Mycobacterium</taxon>
        <taxon>Mycobacterium ulcerans group</taxon>
    </lineage>
</organism>
<accession>A0PLZ1</accession>
<proteinExistence type="inferred from homology"/>
<comment type="function">
    <text evidence="1">Exhibits S-adenosyl-L-methionine-dependent methyltransferase activity.</text>
</comment>
<comment type="similarity">
    <text evidence="2">Belongs to the UPF0677 family.</text>
</comment>
<feature type="chain" id="PRO_0000361253" description="Putative S-adenosyl-L-methionine-dependent methyltransferase MUL_0706">
    <location>
        <begin position="1"/>
        <end position="313"/>
    </location>
</feature>
<feature type="binding site" evidence="1">
    <location>
        <position position="132"/>
    </location>
    <ligand>
        <name>S-adenosyl-L-methionine</name>
        <dbReference type="ChEBI" id="CHEBI:59789"/>
    </ligand>
</feature>
<feature type="binding site" evidence="1">
    <location>
        <begin position="161"/>
        <end position="162"/>
    </location>
    <ligand>
        <name>S-adenosyl-L-methionine</name>
        <dbReference type="ChEBI" id="CHEBI:59789"/>
    </ligand>
</feature>
<gene>
    <name type="ordered locus">MUL_0706</name>
</gene>